<dbReference type="EMBL" id="L42023">
    <property type="protein sequence ID" value="AAC21686.1"/>
    <property type="molecule type" value="Genomic_DNA"/>
</dbReference>
<dbReference type="RefSeq" id="NP_438181.1">
    <property type="nucleotide sequence ID" value="NC_000907.1"/>
</dbReference>
<dbReference type="SMR" id="P44451"/>
<dbReference type="STRING" id="71421.HI_0008"/>
<dbReference type="EnsemblBacteria" id="AAC21686">
    <property type="protein sequence ID" value="AAC21686"/>
    <property type="gene ID" value="HI_0008"/>
</dbReference>
<dbReference type="KEGG" id="hin:HI_0008"/>
<dbReference type="PATRIC" id="fig|71421.8.peg.8"/>
<dbReference type="eggNOG" id="COG2864">
    <property type="taxonomic scope" value="Bacteria"/>
</dbReference>
<dbReference type="HOGENOM" id="CLU_091368_1_1_6"/>
<dbReference type="OrthoDB" id="9790598at2"/>
<dbReference type="PhylomeDB" id="P44451"/>
<dbReference type="BioCyc" id="HINF71421:G1GJ1-8-MONOMER"/>
<dbReference type="Proteomes" id="UP000000579">
    <property type="component" value="Chromosome"/>
</dbReference>
<dbReference type="GO" id="GO:0009326">
    <property type="term" value="C:formate dehydrogenase complex"/>
    <property type="evidence" value="ECO:0000318"/>
    <property type="project" value="GO_Central"/>
</dbReference>
<dbReference type="GO" id="GO:0005886">
    <property type="term" value="C:plasma membrane"/>
    <property type="evidence" value="ECO:0000318"/>
    <property type="project" value="GO_Central"/>
</dbReference>
<dbReference type="GO" id="GO:0009055">
    <property type="term" value="F:electron transfer activity"/>
    <property type="evidence" value="ECO:0007669"/>
    <property type="project" value="InterPro"/>
</dbReference>
<dbReference type="GO" id="GO:0008863">
    <property type="term" value="F:formate dehydrogenase (NAD+) activity"/>
    <property type="evidence" value="ECO:0007669"/>
    <property type="project" value="InterPro"/>
</dbReference>
<dbReference type="GO" id="GO:0036397">
    <property type="term" value="F:formate dehydrogenase (quinone) activity"/>
    <property type="evidence" value="ECO:0000318"/>
    <property type="project" value="GO_Central"/>
</dbReference>
<dbReference type="GO" id="GO:0046872">
    <property type="term" value="F:metal ion binding"/>
    <property type="evidence" value="ECO:0007669"/>
    <property type="project" value="UniProtKB-KW"/>
</dbReference>
<dbReference type="GO" id="GO:0009061">
    <property type="term" value="P:anaerobic respiration"/>
    <property type="evidence" value="ECO:0000318"/>
    <property type="project" value="GO_Central"/>
</dbReference>
<dbReference type="GO" id="GO:0015944">
    <property type="term" value="P:formate oxidation"/>
    <property type="evidence" value="ECO:0000318"/>
    <property type="project" value="GO_Central"/>
</dbReference>
<dbReference type="GO" id="GO:0022904">
    <property type="term" value="P:respiratory electron transport chain"/>
    <property type="evidence" value="ECO:0007669"/>
    <property type="project" value="InterPro"/>
</dbReference>
<dbReference type="FunFam" id="1.20.950.20:FF:000002">
    <property type="entry name" value="Formate dehydrogenase cytochrome b556 subunit"/>
    <property type="match status" value="1"/>
</dbReference>
<dbReference type="Gene3D" id="1.20.950.20">
    <property type="entry name" value="Transmembrane di-heme cytochromes, Chain C"/>
    <property type="match status" value="1"/>
</dbReference>
<dbReference type="InterPro" id="IPR011577">
    <property type="entry name" value="Cyt_b561_bac/Ni-Hgenase"/>
</dbReference>
<dbReference type="InterPro" id="IPR016174">
    <property type="entry name" value="Di-haem_cyt_TM"/>
</dbReference>
<dbReference type="InterPro" id="IPR051817">
    <property type="entry name" value="FDH_cytochrome_b556_subunit"/>
</dbReference>
<dbReference type="InterPro" id="IPR006471">
    <property type="entry name" value="Formate_DH_gsu"/>
</dbReference>
<dbReference type="NCBIfam" id="TIGR01583">
    <property type="entry name" value="formate-DH-gamm"/>
    <property type="match status" value="1"/>
</dbReference>
<dbReference type="PANTHER" id="PTHR30074">
    <property type="entry name" value="FORMATE DEHYDROGENASE, NITRATE-INDUCIBLE, CYTOCHROME B556 FDN SUBUNIT"/>
    <property type="match status" value="1"/>
</dbReference>
<dbReference type="PANTHER" id="PTHR30074:SF5">
    <property type="entry name" value="FORMATE DEHYDROGENASE, NITRATE-INDUCIBLE, CYTOCHROME B556(FDN) SUBUNIT"/>
    <property type="match status" value="1"/>
</dbReference>
<dbReference type="Pfam" id="PF01292">
    <property type="entry name" value="Ni_hydr_CYTB"/>
    <property type="match status" value="1"/>
</dbReference>
<dbReference type="SUPFAM" id="SSF81342">
    <property type="entry name" value="Transmembrane di-heme cytochromes"/>
    <property type="match status" value="1"/>
</dbReference>
<keyword id="KW-1003">Cell membrane</keyword>
<keyword id="KW-0249">Electron transport</keyword>
<keyword id="KW-0349">Heme</keyword>
<keyword id="KW-0408">Iron</keyword>
<keyword id="KW-0472">Membrane</keyword>
<keyword id="KW-0479">Metal-binding</keyword>
<keyword id="KW-1185">Reference proteome</keyword>
<keyword id="KW-0812">Transmembrane</keyword>
<keyword id="KW-1133">Transmembrane helix</keyword>
<keyword id="KW-0813">Transport</keyword>
<comment type="function">
    <text evidence="1">Allows to use formate as major electron donor during anaerobic respiration. Subunit gamma is probably the cytochrome b556(FDO) component of the formate dehydrogenase (By similarity).</text>
</comment>
<comment type="cofactor">
    <cofactor evidence="1">
        <name>heme</name>
        <dbReference type="ChEBI" id="CHEBI:30413"/>
    </cofactor>
    <text evidence="1">Binds 2 heme groups per subunit. Heme 1 is located at the cytoplasmic interface, heme 2 is located at the periplasmic interface. Electrons are transferred from the periplasmic to the cytoplasmic heme.</text>
</comment>
<comment type="subunit">
    <text>Formate dehydrogenase is a membrane-bound complex, formed by subunits alpha, beta and gamma.</text>
</comment>
<comment type="subcellular location">
    <subcellularLocation>
        <location evidence="3">Cell membrane</location>
        <topology evidence="3">Multi-pass membrane protein</topology>
    </subcellularLocation>
</comment>
<comment type="similarity">
    <text evidence="3">Belongs to the formate dehydrogenase gamma subunit family.</text>
</comment>
<evidence type="ECO:0000250" key="1"/>
<evidence type="ECO:0000255" key="2"/>
<evidence type="ECO:0000305" key="3"/>
<feature type="chain" id="PRO_0000087217" description="Formate dehydrogenase, cytochrome b556 subunit">
    <location>
        <begin position="1"/>
        <end position="238"/>
    </location>
</feature>
<feature type="transmembrane region" description="Helical" evidence="2">
    <location>
        <begin position="23"/>
        <end position="43"/>
    </location>
</feature>
<feature type="transmembrane region" description="Helical" evidence="2">
    <location>
        <begin position="60"/>
        <end position="80"/>
    </location>
</feature>
<feature type="transmembrane region" description="Helical" evidence="2">
    <location>
        <begin position="120"/>
        <end position="140"/>
    </location>
</feature>
<feature type="transmembrane region" description="Helical" evidence="2">
    <location>
        <begin position="155"/>
        <end position="175"/>
    </location>
</feature>
<feature type="binding site" description="axial binding residue" evidence="1">
    <location>
        <position position="23"/>
    </location>
    <ligand>
        <name>heme b</name>
        <dbReference type="ChEBI" id="CHEBI:60344"/>
        <label>1</label>
    </ligand>
    <ligandPart>
        <name>Fe</name>
        <dbReference type="ChEBI" id="CHEBI:18248"/>
    </ligandPart>
</feature>
<feature type="binding site" description="axial binding residue" evidence="1">
    <location>
        <position position="62"/>
    </location>
    <ligand>
        <name>heme b</name>
        <dbReference type="ChEBI" id="CHEBI:60344"/>
        <label>2</label>
    </ligand>
    <ligandPart>
        <name>Fe</name>
        <dbReference type="ChEBI" id="CHEBI:18248"/>
    </ligandPart>
</feature>
<feature type="binding site" description="axial binding residue" evidence="1">
    <location>
        <position position="160"/>
    </location>
    <ligand>
        <name>heme b</name>
        <dbReference type="ChEBI" id="CHEBI:60344"/>
        <label>2</label>
    </ligand>
    <ligandPart>
        <name>Fe</name>
        <dbReference type="ChEBI" id="CHEBI:18248"/>
    </ligandPart>
</feature>
<feature type="binding site" description="axial binding residue" evidence="1">
    <location>
        <position position="174"/>
    </location>
    <ligand>
        <name>heme b</name>
        <dbReference type="ChEBI" id="CHEBI:60344"/>
        <label>1</label>
    </ligand>
    <ligandPart>
        <name>Fe</name>
        <dbReference type="ChEBI" id="CHEBI:18248"/>
    </ligandPart>
</feature>
<protein>
    <recommendedName>
        <fullName>Formate dehydrogenase, cytochrome b556 subunit</fullName>
    </recommendedName>
    <alternativeName>
        <fullName>Formate dehydrogenase subunit gamma</fullName>
        <shortName>FDH subunit gamma</shortName>
    </alternativeName>
</protein>
<reference key="1">
    <citation type="journal article" date="1995" name="Science">
        <title>Whole-genome random sequencing and assembly of Haemophilus influenzae Rd.</title>
        <authorList>
            <person name="Fleischmann R.D."/>
            <person name="Adams M.D."/>
            <person name="White O."/>
            <person name="Clayton R.A."/>
            <person name="Kirkness E.F."/>
            <person name="Kerlavage A.R."/>
            <person name="Bult C.J."/>
            <person name="Tomb J.-F."/>
            <person name="Dougherty B.A."/>
            <person name="Merrick J.M."/>
            <person name="McKenney K."/>
            <person name="Sutton G.G."/>
            <person name="FitzHugh W."/>
            <person name="Fields C.A."/>
            <person name="Gocayne J.D."/>
            <person name="Scott J.D."/>
            <person name="Shirley R."/>
            <person name="Liu L.-I."/>
            <person name="Glodek A."/>
            <person name="Kelley J.M."/>
            <person name="Weidman J.F."/>
            <person name="Phillips C.A."/>
            <person name="Spriggs T."/>
            <person name="Hedblom E."/>
            <person name="Cotton M.D."/>
            <person name="Utterback T.R."/>
            <person name="Hanna M.C."/>
            <person name="Nguyen D.T."/>
            <person name="Saudek D.M."/>
            <person name="Brandon R.C."/>
            <person name="Fine L.D."/>
            <person name="Fritchman J.L."/>
            <person name="Fuhrmann J.L."/>
            <person name="Geoghagen N.S.M."/>
            <person name="Gnehm C.L."/>
            <person name="McDonald L.A."/>
            <person name="Small K.V."/>
            <person name="Fraser C.M."/>
            <person name="Smith H.O."/>
            <person name="Venter J.C."/>
        </authorList>
    </citation>
    <scope>NUCLEOTIDE SEQUENCE [LARGE SCALE GENOMIC DNA]</scope>
    <source>
        <strain>ATCC 51907 / DSM 11121 / KW20 / Rd</strain>
    </source>
</reference>
<reference key="2">
    <citation type="submission" date="1996-09" db="EMBL/GenBank/DDBJ databases">
        <authorList>
            <person name="White O."/>
            <person name="Clayton R.A."/>
            <person name="Kerlavage A.R."/>
            <person name="Fleischmann R.D."/>
        </authorList>
    </citation>
    <scope>SEQUENCE REVISION</scope>
</reference>
<proteinExistence type="inferred from homology"/>
<gene>
    <name type="primary">fdxI</name>
    <name type="ordered locus">HI_0008</name>
</gene>
<organism>
    <name type="scientific">Haemophilus influenzae (strain ATCC 51907 / DSM 11121 / KW20 / Rd)</name>
    <dbReference type="NCBI Taxonomy" id="71421"/>
    <lineage>
        <taxon>Bacteria</taxon>
        <taxon>Pseudomonadati</taxon>
        <taxon>Pseudomonadota</taxon>
        <taxon>Gammaproteobacteria</taxon>
        <taxon>Pasteurellales</taxon>
        <taxon>Pasteurellaceae</taxon>
        <taxon>Haemophilus</taxon>
    </lineage>
</organism>
<name>FDXI_HAEIN</name>
<accession>P44451</accession>
<sequence length="238" mass="27758">MSKIEISNDTRIIRHRTPARISHWMLVICFFMTMFTGVAFFFPDFAWLTEILGTPQIARAIHPFTGILMFFAFIYLALLYWDHNIPEKNDIRWAKGVIEVLKGNEHAVADNGKYNLGQKMLFWTLNLAMVTLLVTGIIMWRQYFSHYFSIPVLRIAILLHSASAFMLFTGILVHIYMAFWVKGSIRGIVEGWVTVRWAKKHHPRWYREEVLSKLEEDLLNEQSGKVGKTKVLFKGFGK</sequence>